<feature type="chain" id="PRO_1000139736" description="N-acetylneuraminate lyase">
    <location>
        <begin position="1"/>
        <end position="297"/>
    </location>
</feature>
<feature type="active site" description="Proton donor" evidence="1">
    <location>
        <position position="137"/>
    </location>
</feature>
<feature type="active site" description="Schiff-base intermediate with substrate" evidence="1">
    <location>
        <position position="165"/>
    </location>
</feature>
<feature type="binding site" evidence="1">
    <location>
        <position position="47"/>
    </location>
    <ligand>
        <name>aceneuramate</name>
        <dbReference type="ChEBI" id="CHEBI:173083"/>
    </ligand>
</feature>
<feature type="binding site" evidence="1">
    <location>
        <position position="48"/>
    </location>
    <ligand>
        <name>aceneuramate</name>
        <dbReference type="ChEBI" id="CHEBI:173083"/>
    </ligand>
</feature>
<feature type="binding site" evidence="1">
    <location>
        <position position="167"/>
    </location>
    <ligand>
        <name>aceneuramate</name>
        <dbReference type="ChEBI" id="CHEBI:173083"/>
    </ligand>
</feature>
<feature type="binding site" evidence="1">
    <location>
        <position position="189"/>
    </location>
    <ligand>
        <name>aceneuramate</name>
        <dbReference type="ChEBI" id="CHEBI:173083"/>
    </ligand>
</feature>
<feature type="binding site" evidence="1">
    <location>
        <position position="191"/>
    </location>
    <ligand>
        <name>aceneuramate</name>
        <dbReference type="ChEBI" id="CHEBI:173083"/>
    </ligand>
</feature>
<feature type="binding site" evidence="1">
    <location>
        <position position="192"/>
    </location>
    <ligand>
        <name>aceneuramate</name>
        <dbReference type="ChEBI" id="CHEBI:173083"/>
    </ligand>
</feature>
<feature type="binding site" evidence="1">
    <location>
        <position position="208"/>
    </location>
    <ligand>
        <name>aceneuramate</name>
        <dbReference type="ChEBI" id="CHEBI:173083"/>
    </ligand>
</feature>
<proteinExistence type="inferred from homology"/>
<gene>
    <name evidence="1" type="primary">nanA</name>
    <name type="ordered locus">EcSMS35_3520</name>
</gene>
<dbReference type="EC" id="4.1.3.3" evidence="1"/>
<dbReference type="EMBL" id="CP000970">
    <property type="protein sequence ID" value="ACB16459.1"/>
    <property type="molecule type" value="Genomic_DNA"/>
</dbReference>
<dbReference type="RefSeq" id="WP_000224706.1">
    <property type="nucleotide sequence ID" value="NC_010498.1"/>
</dbReference>
<dbReference type="SMR" id="B1LGJ0"/>
<dbReference type="GeneID" id="86948090"/>
<dbReference type="KEGG" id="ecm:EcSMS35_3520"/>
<dbReference type="HOGENOM" id="CLU_049343_6_0_6"/>
<dbReference type="UniPathway" id="UPA00629">
    <property type="reaction ID" value="UER00680"/>
</dbReference>
<dbReference type="Proteomes" id="UP000007011">
    <property type="component" value="Chromosome"/>
</dbReference>
<dbReference type="GO" id="GO:0005829">
    <property type="term" value="C:cytosol"/>
    <property type="evidence" value="ECO:0007669"/>
    <property type="project" value="TreeGrafter"/>
</dbReference>
<dbReference type="GO" id="GO:0008747">
    <property type="term" value="F:N-acetylneuraminate lyase activity"/>
    <property type="evidence" value="ECO:0007669"/>
    <property type="project" value="UniProtKB-UniRule"/>
</dbReference>
<dbReference type="GO" id="GO:0005975">
    <property type="term" value="P:carbohydrate metabolic process"/>
    <property type="evidence" value="ECO:0007669"/>
    <property type="project" value="UniProtKB-UniRule"/>
</dbReference>
<dbReference type="GO" id="GO:0019262">
    <property type="term" value="P:N-acetylneuraminate catabolic process"/>
    <property type="evidence" value="ECO:0007669"/>
    <property type="project" value="UniProtKB-UniRule"/>
</dbReference>
<dbReference type="CDD" id="cd00954">
    <property type="entry name" value="NAL"/>
    <property type="match status" value="1"/>
</dbReference>
<dbReference type="FunFam" id="3.20.20.70:FF:000039">
    <property type="entry name" value="N-acetylneuraminate lyase"/>
    <property type="match status" value="1"/>
</dbReference>
<dbReference type="Gene3D" id="3.20.20.70">
    <property type="entry name" value="Aldolase class I"/>
    <property type="match status" value="1"/>
</dbReference>
<dbReference type="HAMAP" id="MF_01237">
    <property type="entry name" value="N_acetylneuram_lyase"/>
    <property type="match status" value="1"/>
</dbReference>
<dbReference type="InterPro" id="IPR013785">
    <property type="entry name" value="Aldolase_TIM"/>
</dbReference>
<dbReference type="InterPro" id="IPR002220">
    <property type="entry name" value="DapA-like"/>
</dbReference>
<dbReference type="InterPro" id="IPR005264">
    <property type="entry name" value="NanA"/>
</dbReference>
<dbReference type="InterPro" id="IPR020625">
    <property type="entry name" value="Schiff_base-form_aldolases_AS"/>
</dbReference>
<dbReference type="InterPro" id="IPR020624">
    <property type="entry name" value="Schiff_base-form_aldolases_CS"/>
</dbReference>
<dbReference type="NCBIfam" id="TIGR00683">
    <property type="entry name" value="nanA"/>
    <property type="match status" value="1"/>
</dbReference>
<dbReference type="NCBIfam" id="NF003164">
    <property type="entry name" value="PRK04147.1"/>
    <property type="match status" value="1"/>
</dbReference>
<dbReference type="PANTHER" id="PTHR42849">
    <property type="entry name" value="N-ACETYLNEURAMINATE LYASE"/>
    <property type="match status" value="1"/>
</dbReference>
<dbReference type="PANTHER" id="PTHR42849:SF1">
    <property type="entry name" value="N-ACETYLNEURAMINATE LYASE"/>
    <property type="match status" value="1"/>
</dbReference>
<dbReference type="Pfam" id="PF00701">
    <property type="entry name" value="DHDPS"/>
    <property type="match status" value="1"/>
</dbReference>
<dbReference type="PIRSF" id="PIRSF001365">
    <property type="entry name" value="DHDPS"/>
    <property type="match status" value="1"/>
</dbReference>
<dbReference type="PRINTS" id="PR00146">
    <property type="entry name" value="DHPICSNTHASE"/>
</dbReference>
<dbReference type="SMART" id="SM01130">
    <property type="entry name" value="DHDPS"/>
    <property type="match status" value="1"/>
</dbReference>
<dbReference type="SUPFAM" id="SSF51569">
    <property type="entry name" value="Aldolase"/>
    <property type="match status" value="1"/>
</dbReference>
<dbReference type="PROSITE" id="PS00665">
    <property type="entry name" value="DHDPS_1"/>
    <property type="match status" value="1"/>
</dbReference>
<dbReference type="PROSITE" id="PS00666">
    <property type="entry name" value="DHDPS_2"/>
    <property type="match status" value="1"/>
</dbReference>
<organism>
    <name type="scientific">Escherichia coli (strain SMS-3-5 / SECEC)</name>
    <dbReference type="NCBI Taxonomy" id="439855"/>
    <lineage>
        <taxon>Bacteria</taxon>
        <taxon>Pseudomonadati</taxon>
        <taxon>Pseudomonadota</taxon>
        <taxon>Gammaproteobacteria</taxon>
        <taxon>Enterobacterales</taxon>
        <taxon>Enterobacteriaceae</taxon>
        <taxon>Escherichia</taxon>
    </lineage>
</organism>
<sequence length="297" mass="32579">MATNLRGVMAALLTPFDQQQALDKASLRRLVQFNIQQGIDGLYVGGSTGEAFVQSLSEREQVLEIVAEEAKGKIKLIAHVGCVSTAESQQLAASAKRYGFDAVSAVTPFYYPFSFEEHCDHYRAIIDSADGLPMVVYNIPALSGVKLSLDQINTLVTLPGVGALKQTSGDLYQMEQIRREHPDLVLYNGYDEIFASGLLAGADGGIGSTYNIMGWRYQGIVKALKEGDIQTAQKLQTECNKVIDLLIKTGVFRGLKTVLHYMDVVSVPLCRKPFGPVDEKYLPELKALAQQLMQERG</sequence>
<keyword id="KW-0119">Carbohydrate metabolism</keyword>
<keyword id="KW-0963">Cytoplasm</keyword>
<keyword id="KW-0456">Lyase</keyword>
<keyword id="KW-0704">Schiff base</keyword>
<protein>
    <recommendedName>
        <fullName evidence="1">N-acetylneuraminate lyase</fullName>
        <shortName evidence="1">NAL</shortName>
        <shortName evidence="1">Neu5Ac lyase</shortName>
        <ecNumber evidence="1">4.1.3.3</ecNumber>
    </recommendedName>
    <alternativeName>
        <fullName evidence="1">N-acetylneuraminate pyruvate-lyase</fullName>
    </alternativeName>
    <alternativeName>
        <fullName evidence="1">N-acetylneuraminic acid aldolase</fullName>
    </alternativeName>
    <alternativeName>
        <fullName evidence="1">Sialate lyase</fullName>
    </alternativeName>
    <alternativeName>
        <fullName evidence="1">Sialic acid aldolase</fullName>
    </alternativeName>
    <alternativeName>
        <fullName evidence="1">Sialic acid lyase</fullName>
    </alternativeName>
</protein>
<reference key="1">
    <citation type="journal article" date="2008" name="J. Bacteriol.">
        <title>Insights into the environmental resistance gene pool from the genome sequence of the multidrug-resistant environmental isolate Escherichia coli SMS-3-5.</title>
        <authorList>
            <person name="Fricke W.F."/>
            <person name="Wright M.S."/>
            <person name="Lindell A.H."/>
            <person name="Harkins D.M."/>
            <person name="Baker-Austin C."/>
            <person name="Ravel J."/>
            <person name="Stepanauskas R."/>
        </authorList>
    </citation>
    <scope>NUCLEOTIDE SEQUENCE [LARGE SCALE GENOMIC DNA]</scope>
    <source>
        <strain>SMS-3-5 / SECEC</strain>
    </source>
</reference>
<evidence type="ECO:0000255" key="1">
    <source>
        <dbReference type="HAMAP-Rule" id="MF_01237"/>
    </source>
</evidence>
<name>NANA_ECOSM</name>
<accession>B1LGJ0</accession>
<comment type="function">
    <text evidence="1">Catalyzes the reversible aldol cleavage of N-acetylneuraminic acid (sialic acid; Neu5Ac) to form pyruvate and N-acetylmannosamine (ManNAc) via a Schiff base intermediate.</text>
</comment>
<comment type="catalytic activity">
    <reaction evidence="1">
        <text>aceneuramate = aldehydo-N-acetyl-D-mannosamine + pyruvate</text>
        <dbReference type="Rhea" id="RHEA:23296"/>
        <dbReference type="ChEBI" id="CHEBI:15361"/>
        <dbReference type="ChEBI" id="CHEBI:17122"/>
        <dbReference type="ChEBI" id="CHEBI:173083"/>
        <dbReference type="EC" id="4.1.3.3"/>
    </reaction>
</comment>
<comment type="pathway">
    <text evidence="1">Amino-sugar metabolism; N-acetylneuraminate degradation; D-fructose 6-phosphate from N-acetylneuraminate: step 1/5.</text>
</comment>
<comment type="subunit">
    <text evidence="1">Homotetramer.</text>
</comment>
<comment type="subcellular location">
    <subcellularLocation>
        <location evidence="1">Cytoplasm</location>
    </subcellularLocation>
</comment>
<comment type="similarity">
    <text evidence="1">Belongs to the DapA family. NanA subfamily.</text>
</comment>